<protein>
    <recommendedName>
        <fullName evidence="1">Aspartate 1-decarboxylase</fullName>
        <ecNumber evidence="1">4.1.1.11</ecNumber>
    </recommendedName>
    <alternativeName>
        <fullName evidence="1">Aspartate alpha-decarboxylase</fullName>
    </alternativeName>
    <component>
        <recommendedName>
            <fullName evidence="1">Aspartate 1-decarboxylase beta chain</fullName>
        </recommendedName>
    </component>
    <component>
        <recommendedName>
            <fullName evidence="1">Aspartate 1-decarboxylase alpha chain</fullName>
        </recommendedName>
    </component>
</protein>
<proteinExistence type="inferred from homology"/>
<organism>
    <name type="scientific">Tolumonas auensis (strain DSM 9187 / NBRC 110442 / TA 4)</name>
    <dbReference type="NCBI Taxonomy" id="595494"/>
    <lineage>
        <taxon>Bacteria</taxon>
        <taxon>Pseudomonadati</taxon>
        <taxon>Pseudomonadota</taxon>
        <taxon>Gammaproteobacteria</taxon>
        <taxon>Aeromonadales</taxon>
        <taxon>Aeromonadaceae</taxon>
        <taxon>Tolumonas</taxon>
    </lineage>
</organism>
<reference key="1">
    <citation type="submission" date="2009-05" db="EMBL/GenBank/DDBJ databases">
        <title>Complete sequence of Tolumonas auensis DSM 9187.</title>
        <authorList>
            <consortium name="US DOE Joint Genome Institute"/>
            <person name="Lucas S."/>
            <person name="Copeland A."/>
            <person name="Lapidus A."/>
            <person name="Glavina del Rio T."/>
            <person name="Tice H."/>
            <person name="Bruce D."/>
            <person name="Goodwin L."/>
            <person name="Pitluck S."/>
            <person name="Chertkov O."/>
            <person name="Brettin T."/>
            <person name="Detter J.C."/>
            <person name="Han C."/>
            <person name="Larimer F."/>
            <person name="Land M."/>
            <person name="Hauser L."/>
            <person name="Kyrpides N."/>
            <person name="Mikhailova N."/>
            <person name="Spring S."/>
            <person name="Beller H."/>
        </authorList>
    </citation>
    <scope>NUCLEOTIDE SEQUENCE [LARGE SCALE GENOMIC DNA]</scope>
    <source>
        <strain>DSM 9187 / NBRC 110442 / TA 4</strain>
    </source>
</reference>
<feature type="chain" id="PRO_1000206196" description="Aspartate 1-decarboxylase beta chain" evidence="1">
    <location>
        <begin position="1"/>
        <end position="24"/>
    </location>
</feature>
<feature type="chain" id="PRO_1000206197" description="Aspartate 1-decarboxylase alpha chain" evidence="1">
    <location>
        <begin position="25"/>
        <end position="126"/>
    </location>
</feature>
<feature type="active site" description="Schiff-base intermediate with substrate; via pyruvic acid" evidence="1">
    <location>
        <position position="25"/>
    </location>
</feature>
<feature type="active site" description="Proton donor" evidence="1">
    <location>
        <position position="58"/>
    </location>
</feature>
<feature type="binding site" evidence="1">
    <location>
        <position position="57"/>
    </location>
    <ligand>
        <name>substrate</name>
    </ligand>
</feature>
<feature type="binding site" evidence="1">
    <location>
        <begin position="73"/>
        <end position="75"/>
    </location>
    <ligand>
        <name>substrate</name>
    </ligand>
</feature>
<feature type="modified residue" description="Pyruvic acid (Ser)" evidence="1">
    <location>
        <position position="25"/>
    </location>
</feature>
<comment type="function">
    <text evidence="1">Catalyzes the pyruvoyl-dependent decarboxylation of aspartate to produce beta-alanine.</text>
</comment>
<comment type="catalytic activity">
    <reaction evidence="1">
        <text>L-aspartate + H(+) = beta-alanine + CO2</text>
        <dbReference type="Rhea" id="RHEA:19497"/>
        <dbReference type="ChEBI" id="CHEBI:15378"/>
        <dbReference type="ChEBI" id="CHEBI:16526"/>
        <dbReference type="ChEBI" id="CHEBI:29991"/>
        <dbReference type="ChEBI" id="CHEBI:57966"/>
        <dbReference type="EC" id="4.1.1.11"/>
    </reaction>
</comment>
<comment type="cofactor">
    <cofactor evidence="1">
        <name>pyruvate</name>
        <dbReference type="ChEBI" id="CHEBI:15361"/>
    </cofactor>
    <text evidence="1">Binds 1 pyruvoyl group covalently per subunit.</text>
</comment>
<comment type="pathway">
    <text evidence="1">Cofactor biosynthesis; (R)-pantothenate biosynthesis; beta-alanine from L-aspartate: step 1/1.</text>
</comment>
<comment type="subunit">
    <text evidence="1">Heterooctamer of four alpha and four beta subunits.</text>
</comment>
<comment type="subcellular location">
    <subcellularLocation>
        <location evidence="1">Cytoplasm</location>
    </subcellularLocation>
</comment>
<comment type="PTM">
    <text evidence="1">Is synthesized initially as an inactive proenzyme, which is activated by self-cleavage at a specific serine bond to produce a beta-subunit with a hydroxyl group at its C-terminus and an alpha-subunit with a pyruvoyl group at its N-terminus.</text>
</comment>
<comment type="similarity">
    <text evidence="1">Belongs to the PanD family.</text>
</comment>
<accession>C4L931</accession>
<dbReference type="EC" id="4.1.1.11" evidence="1"/>
<dbReference type="EMBL" id="CP001616">
    <property type="protein sequence ID" value="ACQ93901.1"/>
    <property type="molecule type" value="Genomic_DNA"/>
</dbReference>
<dbReference type="RefSeq" id="WP_015879369.1">
    <property type="nucleotide sequence ID" value="NC_012691.1"/>
</dbReference>
<dbReference type="SMR" id="C4L931"/>
<dbReference type="STRING" id="595494.Tola_2304"/>
<dbReference type="KEGG" id="tau:Tola_2304"/>
<dbReference type="eggNOG" id="COG0853">
    <property type="taxonomic scope" value="Bacteria"/>
</dbReference>
<dbReference type="HOGENOM" id="CLU_115305_2_1_6"/>
<dbReference type="OrthoDB" id="9803983at2"/>
<dbReference type="UniPathway" id="UPA00028">
    <property type="reaction ID" value="UER00002"/>
</dbReference>
<dbReference type="Proteomes" id="UP000009073">
    <property type="component" value="Chromosome"/>
</dbReference>
<dbReference type="GO" id="GO:0005829">
    <property type="term" value="C:cytosol"/>
    <property type="evidence" value="ECO:0007669"/>
    <property type="project" value="TreeGrafter"/>
</dbReference>
<dbReference type="GO" id="GO:0004068">
    <property type="term" value="F:aspartate 1-decarboxylase activity"/>
    <property type="evidence" value="ECO:0007669"/>
    <property type="project" value="UniProtKB-UniRule"/>
</dbReference>
<dbReference type="GO" id="GO:0006523">
    <property type="term" value="P:alanine biosynthetic process"/>
    <property type="evidence" value="ECO:0007669"/>
    <property type="project" value="InterPro"/>
</dbReference>
<dbReference type="GO" id="GO:0015940">
    <property type="term" value="P:pantothenate biosynthetic process"/>
    <property type="evidence" value="ECO:0007669"/>
    <property type="project" value="UniProtKB-UniRule"/>
</dbReference>
<dbReference type="CDD" id="cd06919">
    <property type="entry name" value="Asp_decarbox"/>
    <property type="match status" value="1"/>
</dbReference>
<dbReference type="Gene3D" id="2.40.40.20">
    <property type="match status" value="1"/>
</dbReference>
<dbReference type="HAMAP" id="MF_00446">
    <property type="entry name" value="PanD"/>
    <property type="match status" value="1"/>
</dbReference>
<dbReference type="InterPro" id="IPR009010">
    <property type="entry name" value="Asp_de-COase-like_dom_sf"/>
</dbReference>
<dbReference type="InterPro" id="IPR003190">
    <property type="entry name" value="Asp_decarbox"/>
</dbReference>
<dbReference type="NCBIfam" id="TIGR00223">
    <property type="entry name" value="panD"/>
    <property type="match status" value="1"/>
</dbReference>
<dbReference type="PANTHER" id="PTHR21012">
    <property type="entry name" value="ASPARTATE 1-DECARBOXYLASE"/>
    <property type="match status" value="1"/>
</dbReference>
<dbReference type="PANTHER" id="PTHR21012:SF0">
    <property type="entry name" value="ASPARTATE 1-DECARBOXYLASE"/>
    <property type="match status" value="1"/>
</dbReference>
<dbReference type="Pfam" id="PF02261">
    <property type="entry name" value="Asp_decarbox"/>
    <property type="match status" value="1"/>
</dbReference>
<dbReference type="PIRSF" id="PIRSF006246">
    <property type="entry name" value="Asp_decarbox"/>
    <property type="match status" value="1"/>
</dbReference>
<dbReference type="SUPFAM" id="SSF50692">
    <property type="entry name" value="ADC-like"/>
    <property type="match status" value="1"/>
</dbReference>
<gene>
    <name evidence="1" type="primary">panD</name>
    <name type="ordered locus">Tola_2304</name>
</gene>
<name>PAND_TOLAT</name>
<keyword id="KW-0068">Autocatalytic cleavage</keyword>
<keyword id="KW-0963">Cytoplasm</keyword>
<keyword id="KW-0210">Decarboxylase</keyword>
<keyword id="KW-0456">Lyase</keyword>
<keyword id="KW-0566">Pantothenate biosynthesis</keyword>
<keyword id="KW-0670">Pyruvate</keyword>
<keyword id="KW-1185">Reference proteome</keyword>
<keyword id="KW-0704">Schiff base</keyword>
<keyword id="KW-0865">Zymogen</keyword>
<evidence type="ECO:0000255" key="1">
    <source>
        <dbReference type="HAMAP-Rule" id="MF_00446"/>
    </source>
</evidence>
<sequence length="126" mass="13954">MQRIMLRGKLHQARVTHAVLNYEGSCGIDQDFLDAAGIVEYEAIDIYNIENGERFSTYAISGERGSRMISLNGAAARKAAVGDRIIICAYGPMTEDEVAQHKPRLVYLDAQNNIVRTSKDIPLQLA</sequence>